<reference key="1">
    <citation type="journal article" date="2003" name="Nat. Genet.">
        <title>Comparative analysis of the genome sequences of Bordetella pertussis, Bordetella parapertussis and Bordetella bronchiseptica.</title>
        <authorList>
            <person name="Parkhill J."/>
            <person name="Sebaihia M."/>
            <person name="Preston A."/>
            <person name="Murphy L.D."/>
            <person name="Thomson N.R."/>
            <person name="Harris D.E."/>
            <person name="Holden M.T.G."/>
            <person name="Churcher C.M."/>
            <person name="Bentley S.D."/>
            <person name="Mungall K.L."/>
            <person name="Cerdeno-Tarraga A.-M."/>
            <person name="Temple L."/>
            <person name="James K.D."/>
            <person name="Harris B."/>
            <person name="Quail M.A."/>
            <person name="Achtman M."/>
            <person name="Atkin R."/>
            <person name="Baker S."/>
            <person name="Basham D."/>
            <person name="Bason N."/>
            <person name="Cherevach I."/>
            <person name="Chillingworth T."/>
            <person name="Collins M."/>
            <person name="Cronin A."/>
            <person name="Davis P."/>
            <person name="Doggett J."/>
            <person name="Feltwell T."/>
            <person name="Goble A."/>
            <person name="Hamlin N."/>
            <person name="Hauser H."/>
            <person name="Holroyd S."/>
            <person name="Jagels K."/>
            <person name="Leather S."/>
            <person name="Moule S."/>
            <person name="Norberczak H."/>
            <person name="O'Neil S."/>
            <person name="Ormond D."/>
            <person name="Price C."/>
            <person name="Rabbinowitsch E."/>
            <person name="Rutter S."/>
            <person name="Sanders M."/>
            <person name="Saunders D."/>
            <person name="Seeger K."/>
            <person name="Sharp S."/>
            <person name="Simmonds M."/>
            <person name="Skelton J."/>
            <person name="Squares R."/>
            <person name="Squares S."/>
            <person name="Stevens K."/>
            <person name="Unwin L."/>
            <person name="Whitehead S."/>
            <person name="Barrell B.G."/>
            <person name="Maskell D.J."/>
        </authorList>
    </citation>
    <scope>NUCLEOTIDE SEQUENCE [LARGE SCALE GENOMIC DNA]</scope>
    <source>
        <strain>12822 / ATCC BAA-587 / NCTC 13253</strain>
    </source>
</reference>
<organism>
    <name type="scientific">Bordetella parapertussis (strain 12822 / ATCC BAA-587 / NCTC 13253)</name>
    <dbReference type="NCBI Taxonomy" id="257311"/>
    <lineage>
        <taxon>Bacteria</taxon>
        <taxon>Pseudomonadati</taxon>
        <taxon>Pseudomonadota</taxon>
        <taxon>Betaproteobacteria</taxon>
        <taxon>Burkholderiales</taxon>
        <taxon>Alcaligenaceae</taxon>
        <taxon>Bordetella</taxon>
    </lineage>
</organism>
<comment type="function">
    <text evidence="1">Together with LptE, is involved in the assembly of lipopolysaccharide (LPS) at the surface of the outer membrane.</text>
</comment>
<comment type="subunit">
    <text evidence="1">Component of the lipopolysaccharide transport and assembly complex. Interacts with LptE and LptA.</text>
</comment>
<comment type="subcellular location">
    <subcellularLocation>
        <location evidence="1">Cell outer membrane</location>
    </subcellularLocation>
</comment>
<comment type="similarity">
    <text evidence="1">Belongs to the LptD family.</text>
</comment>
<feature type="signal peptide" evidence="1">
    <location>
        <begin position="1"/>
        <end position="20"/>
    </location>
</feature>
<feature type="chain" id="PRO_0000281590" description="LPS-assembly protein LptD">
    <location>
        <begin position="21"/>
        <end position="790"/>
    </location>
</feature>
<gene>
    <name evidence="1" type="primary">lptD</name>
    <name type="synonym">imp</name>
    <name type="synonym">ostA</name>
    <name type="ordered locus">BPP3667</name>
</gene>
<accession>Q7W4J4</accession>
<evidence type="ECO:0000255" key="1">
    <source>
        <dbReference type="HAMAP-Rule" id="MF_01411"/>
    </source>
</evidence>
<keyword id="KW-0998">Cell outer membrane</keyword>
<keyword id="KW-0472">Membrane</keyword>
<keyword id="KW-0732">Signal</keyword>
<proteinExistence type="inferred from homology"/>
<dbReference type="EMBL" id="BX640434">
    <property type="protein sequence ID" value="CAE38951.1"/>
    <property type="molecule type" value="Genomic_DNA"/>
</dbReference>
<dbReference type="RefSeq" id="WP_003814429.1">
    <property type="nucleotide sequence ID" value="NC_002928.3"/>
</dbReference>
<dbReference type="SMR" id="Q7W4J4"/>
<dbReference type="KEGG" id="bpa:BPP3667"/>
<dbReference type="HOGENOM" id="CLU_009039_0_0_4"/>
<dbReference type="Proteomes" id="UP000001421">
    <property type="component" value="Chromosome"/>
</dbReference>
<dbReference type="GO" id="GO:0009279">
    <property type="term" value="C:cell outer membrane"/>
    <property type="evidence" value="ECO:0007669"/>
    <property type="project" value="UniProtKB-SubCell"/>
</dbReference>
<dbReference type="GO" id="GO:1990351">
    <property type="term" value="C:transporter complex"/>
    <property type="evidence" value="ECO:0007669"/>
    <property type="project" value="TreeGrafter"/>
</dbReference>
<dbReference type="GO" id="GO:0043165">
    <property type="term" value="P:Gram-negative-bacterium-type cell outer membrane assembly"/>
    <property type="evidence" value="ECO:0007669"/>
    <property type="project" value="UniProtKB-UniRule"/>
</dbReference>
<dbReference type="GO" id="GO:0015920">
    <property type="term" value="P:lipopolysaccharide transport"/>
    <property type="evidence" value="ECO:0007669"/>
    <property type="project" value="InterPro"/>
</dbReference>
<dbReference type="Gene3D" id="2.60.450.10">
    <property type="entry name" value="Lipopolysaccharide (LPS) transport protein A like domain"/>
    <property type="match status" value="1"/>
</dbReference>
<dbReference type="HAMAP" id="MF_01411">
    <property type="entry name" value="LPS_assembly_LptD"/>
    <property type="match status" value="1"/>
</dbReference>
<dbReference type="InterPro" id="IPR020889">
    <property type="entry name" value="LipoPS_assembly_LptD"/>
</dbReference>
<dbReference type="InterPro" id="IPR050218">
    <property type="entry name" value="LptD"/>
</dbReference>
<dbReference type="InterPro" id="IPR045659">
    <property type="entry name" value="LptD_2"/>
</dbReference>
<dbReference type="InterPro" id="IPR007543">
    <property type="entry name" value="LptD_C"/>
</dbReference>
<dbReference type="PANTHER" id="PTHR30189">
    <property type="entry name" value="LPS-ASSEMBLY PROTEIN"/>
    <property type="match status" value="1"/>
</dbReference>
<dbReference type="PANTHER" id="PTHR30189:SF1">
    <property type="entry name" value="LPS-ASSEMBLY PROTEIN LPTD"/>
    <property type="match status" value="1"/>
</dbReference>
<dbReference type="Pfam" id="PF04453">
    <property type="entry name" value="LptD"/>
    <property type="match status" value="1"/>
</dbReference>
<dbReference type="Pfam" id="PF19838">
    <property type="entry name" value="LptD_2"/>
    <property type="match status" value="1"/>
</dbReference>
<sequence>MRMLRWLILSAFSVAGAVQAQGNQDSAAASASSASIGAPVLRTSPGLRVHRLPDEKIPAFMEADQISGDPDSEVTLTGNAQVRRVDGIIKGDRINYRRDTGDVDVQGSARMLRDGTLITGPSARLNVDTYSGEIQEPNFWIGASGGTAQARHADIFSKSQMRLSQVTYSGCPCPKPSWYIKADTVDLDFDENEGVARNGVLYFKDVPILASPYLTFPVKKERKSGFLMPTYGTTSNSGFDISLPYYFNLAPNYDLTLVPRYLSKRGAQLGGEFRYLGSGYRGVAIGTYLPDDNETGRDRWMYRTYHRQLLGNGFYTDWDIAGASDDNYFRDISELGLNTASTTYLPRRGRVGWSSTYWQTYAQVYKYQTLQDPDAPLAPPYDKVPELWLKGARYDWGGFDAEWVSTAVRFQRPLLNGRRLGPDGDRLQTYPTVSYPIVRPGWFLVPKVGVHYTQYRTDWYNRDWNRIGLSNYKRTESRTVPIMSLDAGMIFERDASLFGKAATQTLEPRLYYLRVPYRDQSALPVYDTTLADFSFDQAFQENIYTGGWDRIANANQLTAALTTRWLDANTGFERLSLSAAQRIYFQDQEVTLPAEQPRKNVRSDFLVGATAALTDTLTTDVAAQYNPYDNKWSRGMVSARWSPQRLTTVAVAYRYQRDPLPGISYQPQGQNQVSLAVQWPIHRRWYGVGRVDYSLRSEPATAAAAEQSPRVTQAIAGLEYKGDCCWVGRVVYQRYAVSAADTNTALFFQLELTGLGALGTDPISLLNRSIPGYQSVVPPTPTGTTFERYE</sequence>
<protein>
    <recommendedName>
        <fullName evidence="1">LPS-assembly protein LptD</fullName>
    </recommendedName>
</protein>
<name>LPTD_BORPA</name>